<dbReference type="EC" id="7.6.2.2"/>
<dbReference type="EMBL" id="U92650">
    <property type="protein sequence ID" value="AAC49791.1"/>
    <property type="status" value="ALT_FRAME"/>
    <property type="molecule type" value="mRNA"/>
</dbReference>
<dbReference type="EMBL" id="AP000375">
    <property type="protein sequence ID" value="BAB01399.1"/>
    <property type="molecule type" value="Genomic_DNA"/>
</dbReference>
<dbReference type="EMBL" id="CP002686">
    <property type="protein sequence ID" value="AEE75291.1"/>
    <property type="molecule type" value="Genomic_DNA"/>
</dbReference>
<dbReference type="EMBL" id="CP002686">
    <property type="protein sequence ID" value="AEE75292.1"/>
    <property type="molecule type" value="Genomic_DNA"/>
</dbReference>
<dbReference type="PIR" id="T52081">
    <property type="entry name" value="T52081"/>
</dbReference>
<dbReference type="RefSeq" id="NP_187915.1">
    <molecule id="Q9LK64-1"/>
    <property type="nucleotide sequence ID" value="NM_112147.3"/>
</dbReference>
<dbReference type="RefSeq" id="NP_850575.1">
    <molecule id="Q9LK64-2"/>
    <property type="nucleotide sequence ID" value="NM_180244.1"/>
</dbReference>
<dbReference type="SMR" id="Q9LK64"/>
<dbReference type="FunCoup" id="Q9LK64">
    <property type="interactions" value="28"/>
</dbReference>
<dbReference type="STRING" id="3702.Q9LK64"/>
<dbReference type="TCDB" id="3.A.1.208.17">
    <property type="family name" value="the atp-binding cassette (abc) superfamily"/>
</dbReference>
<dbReference type="PaxDb" id="3702-AT3G13080.1"/>
<dbReference type="ProteomicsDB" id="244605">
    <molecule id="Q9LK64-1"/>
</dbReference>
<dbReference type="EnsemblPlants" id="AT3G13080.1">
    <molecule id="Q9LK64-1"/>
    <property type="protein sequence ID" value="AT3G13080.1"/>
    <property type="gene ID" value="AT3G13080"/>
</dbReference>
<dbReference type="EnsemblPlants" id="AT3G13080.2">
    <molecule id="Q9LK64-2"/>
    <property type="protein sequence ID" value="AT3G13080.2"/>
    <property type="gene ID" value="AT3G13080"/>
</dbReference>
<dbReference type="GeneID" id="820496"/>
<dbReference type="Gramene" id="AT3G13080.1">
    <molecule id="Q9LK64-1"/>
    <property type="protein sequence ID" value="AT3G13080.1"/>
    <property type="gene ID" value="AT3G13080"/>
</dbReference>
<dbReference type="Gramene" id="AT3G13080.2">
    <molecule id="Q9LK64-2"/>
    <property type="protein sequence ID" value="AT3G13080.2"/>
    <property type="gene ID" value="AT3G13080"/>
</dbReference>
<dbReference type="KEGG" id="ath:AT3G13080"/>
<dbReference type="Araport" id="AT3G13080"/>
<dbReference type="TAIR" id="AT3G13080">
    <property type="gene designation" value="ABCC3"/>
</dbReference>
<dbReference type="eggNOG" id="KOG0054">
    <property type="taxonomic scope" value="Eukaryota"/>
</dbReference>
<dbReference type="HOGENOM" id="CLU_000604_27_3_1"/>
<dbReference type="InParanoid" id="Q9LK64"/>
<dbReference type="OMA" id="RRRYILW"/>
<dbReference type="OrthoDB" id="6500128at2759"/>
<dbReference type="PhylomeDB" id="Q9LK64"/>
<dbReference type="BioCyc" id="ARA:AT3G13080-MONOMER"/>
<dbReference type="PRO" id="PR:Q9LK64"/>
<dbReference type="Proteomes" id="UP000006548">
    <property type="component" value="Chromosome 3"/>
</dbReference>
<dbReference type="ExpressionAtlas" id="Q9LK64">
    <property type="expression patterns" value="baseline and differential"/>
</dbReference>
<dbReference type="GO" id="GO:0048046">
    <property type="term" value="C:apoplast"/>
    <property type="evidence" value="ECO:0007005"/>
    <property type="project" value="TAIR"/>
</dbReference>
<dbReference type="GO" id="GO:0000325">
    <property type="term" value="C:plant-type vacuole"/>
    <property type="evidence" value="ECO:0007005"/>
    <property type="project" value="TAIR"/>
</dbReference>
<dbReference type="GO" id="GO:0009506">
    <property type="term" value="C:plasmodesma"/>
    <property type="evidence" value="ECO:0007005"/>
    <property type="project" value="TAIR"/>
</dbReference>
<dbReference type="GO" id="GO:0005774">
    <property type="term" value="C:vacuolar membrane"/>
    <property type="evidence" value="ECO:0007005"/>
    <property type="project" value="TAIR"/>
</dbReference>
<dbReference type="GO" id="GO:0005773">
    <property type="term" value="C:vacuole"/>
    <property type="evidence" value="ECO:0007005"/>
    <property type="project" value="TAIR"/>
</dbReference>
<dbReference type="GO" id="GO:0015431">
    <property type="term" value="F:ABC-type glutathione S-conjugate transporter activity"/>
    <property type="evidence" value="ECO:0000314"/>
    <property type="project" value="TAIR"/>
</dbReference>
<dbReference type="GO" id="GO:0008559">
    <property type="term" value="F:ABC-type xenobiotic transporter activity"/>
    <property type="evidence" value="ECO:0007669"/>
    <property type="project" value="UniProtKB-EC"/>
</dbReference>
<dbReference type="GO" id="GO:0005524">
    <property type="term" value="F:ATP binding"/>
    <property type="evidence" value="ECO:0007669"/>
    <property type="project" value="UniProtKB-KW"/>
</dbReference>
<dbReference type="GO" id="GO:0016887">
    <property type="term" value="F:ATP hydrolysis activity"/>
    <property type="evidence" value="ECO:0007669"/>
    <property type="project" value="InterPro"/>
</dbReference>
<dbReference type="GO" id="GO:0042626">
    <property type="term" value="F:ATPase-coupled transmembrane transporter activity"/>
    <property type="evidence" value="ECO:0000314"/>
    <property type="project" value="TAIR"/>
</dbReference>
<dbReference type="GO" id="GO:0010290">
    <property type="term" value="F:chlorophyll catabolite transmembrane transporter activity"/>
    <property type="evidence" value="ECO:0000314"/>
    <property type="project" value="TAIR"/>
</dbReference>
<dbReference type="CDD" id="cd18579">
    <property type="entry name" value="ABC_6TM_ABCC_D1"/>
    <property type="match status" value="1"/>
</dbReference>
<dbReference type="CDD" id="cd18580">
    <property type="entry name" value="ABC_6TM_ABCC_D2"/>
    <property type="match status" value="1"/>
</dbReference>
<dbReference type="CDD" id="cd03250">
    <property type="entry name" value="ABCC_MRP_domain1"/>
    <property type="match status" value="1"/>
</dbReference>
<dbReference type="CDD" id="cd03244">
    <property type="entry name" value="ABCC_MRP_domain2"/>
    <property type="match status" value="1"/>
</dbReference>
<dbReference type="FunFam" id="1.20.1560.10:FF:000003">
    <property type="entry name" value="ABC transporter C family member 10"/>
    <property type="match status" value="1"/>
</dbReference>
<dbReference type="FunFam" id="3.40.50.300:FF:000169">
    <property type="entry name" value="ABC transporter C family member 3"/>
    <property type="match status" value="1"/>
</dbReference>
<dbReference type="FunFam" id="1.20.1560.10:FF:000002">
    <property type="entry name" value="ABC transporter C family member 5"/>
    <property type="match status" value="1"/>
</dbReference>
<dbReference type="FunFam" id="3.40.50.300:FF:000508">
    <property type="entry name" value="ABC transporter C family member 5"/>
    <property type="match status" value="1"/>
</dbReference>
<dbReference type="Gene3D" id="1.20.1560.10">
    <property type="entry name" value="ABC transporter type 1, transmembrane domain"/>
    <property type="match status" value="2"/>
</dbReference>
<dbReference type="Gene3D" id="3.40.50.300">
    <property type="entry name" value="P-loop containing nucleotide triphosphate hydrolases"/>
    <property type="match status" value="2"/>
</dbReference>
<dbReference type="InterPro" id="IPR003593">
    <property type="entry name" value="AAA+_ATPase"/>
</dbReference>
<dbReference type="InterPro" id="IPR011527">
    <property type="entry name" value="ABC1_TM_dom"/>
</dbReference>
<dbReference type="InterPro" id="IPR036640">
    <property type="entry name" value="ABC1_TM_sf"/>
</dbReference>
<dbReference type="InterPro" id="IPR003439">
    <property type="entry name" value="ABC_transporter-like_ATP-bd"/>
</dbReference>
<dbReference type="InterPro" id="IPR017871">
    <property type="entry name" value="ABC_transporter-like_CS"/>
</dbReference>
<dbReference type="InterPro" id="IPR050173">
    <property type="entry name" value="ABC_transporter_C-like"/>
</dbReference>
<dbReference type="InterPro" id="IPR044746">
    <property type="entry name" value="ABCC_6TM_D1"/>
</dbReference>
<dbReference type="InterPro" id="IPR044726">
    <property type="entry name" value="ABCC_6TM_D2"/>
</dbReference>
<dbReference type="InterPro" id="IPR027417">
    <property type="entry name" value="P-loop_NTPase"/>
</dbReference>
<dbReference type="PANTHER" id="PTHR24223:SF181">
    <property type="entry name" value="ABC TRANSPORTER C FAMILY MEMBER 3"/>
    <property type="match status" value="1"/>
</dbReference>
<dbReference type="PANTHER" id="PTHR24223">
    <property type="entry name" value="ATP-BINDING CASSETTE SUB-FAMILY C"/>
    <property type="match status" value="1"/>
</dbReference>
<dbReference type="Pfam" id="PF00664">
    <property type="entry name" value="ABC_membrane"/>
    <property type="match status" value="2"/>
</dbReference>
<dbReference type="Pfam" id="PF00005">
    <property type="entry name" value="ABC_tran"/>
    <property type="match status" value="2"/>
</dbReference>
<dbReference type="SMART" id="SM00382">
    <property type="entry name" value="AAA"/>
    <property type="match status" value="2"/>
</dbReference>
<dbReference type="SUPFAM" id="SSF90123">
    <property type="entry name" value="ABC transporter transmembrane region"/>
    <property type="match status" value="2"/>
</dbReference>
<dbReference type="SUPFAM" id="SSF52540">
    <property type="entry name" value="P-loop containing nucleoside triphosphate hydrolases"/>
    <property type="match status" value="2"/>
</dbReference>
<dbReference type="PROSITE" id="PS50929">
    <property type="entry name" value="ABC_TM1F"/>
    <property type="match status" value="2"/>
</dbReference>
<dbReference type="PROSITE" id="PS00211">
    <property type="entry name" value="ABC_TRANSPORTER_1"/>
    <property type="match status" value="1"/>
</dbReference>
<dbReference type="PROSITE" id="PS50893">
    <property type="entry name" value="ABC_TRANSPORTER_2"/>
    <property type="match status" value="2"/>
</dbReference>
<comment type="function">
    <text evidence="6">Pump for glutathione S-conjugates. Mediates the transport of glutathione conjugates such as chlorodinitrobenzene-GS (DNB-GS), and of chlorophyll catabolites such as Bn-NCC-1. Also transports heavy metals such as cadmium (Cd).</text>
</comment>
<comment type="catalytic activity">
    <reaction>
        <text>ATP + H2O + xenobioticSide 1 = ADP + phosphate + xenobioticSide 2.</text>
        <dbReference type="EC" id="7.6.2.2"/>
    </reaction>
</comment>
<comment type="activity regulation">
    <text evidence="6">Glutathione-conjugate transport is inhibited by decyl-glutathione and, to a lower extent, by GS-GS, but not by GSH. All transports are inhibited by vanadate.</text>
</comment>
<comment type="biophysicochemical properties">
    <kinetics>
        <KM evidence="6">100 uM for DNB-GS (at pH 7.4 and 25 degrees Celsius)</KM>
    </kinetics>
</comment>
<comment type="subcellular location">
    <subcellularLocation>
        <location evidence="2">Membrane</location>
        <topology evidence="2">Multi-pass membrane protein</topology>
    </subcellularLocation>
</comment>
<comment type="alternative products">
    <event type="alternative splicing"/>
    <isoform>
        <id>Q9LK64-1</id>
        <name>1</name>
        <sequence type="displayed"/>
    </isoform>
    <isoform>
        <id>Q9LK64-2</id>
        <name>2</name>
        <sequence type="described" ref="VSP_018099"/>
    </isoform>
</comment>
<comment type="tissue specificity">
    <text evidence="3 6">Ubiquitous.</text>
</comment>
<comment type="induction">
    <text evidence="4 5">By 1-chloro-2,4-dinitrobenzene (CDNB), primisulfuron (PS), aminotriazole, benoxacor, oxabetrinil and IRL 1803, and, to a lower extent, by cloquintocet, fenchlorazol and fluorazol.</text>
</comment>
<comment type="similarity">
    <text evidence="7">Belongs to the ABC transporter superfamily. ABCC family. Conjugate transporter (TC 3.A.1.208) subfamily.</text>
</comment>
<comment type="sequence caution" evidence="7">
    <conflict type="frameshift">
        <sequence resource="EMBL-CDS" id="AAC49791"/>
    </conflict>
</comment>
<evidence type="ECO:0000255" key="1">
    <source>
        <dbReference type="PROSITE-ProRule" id="PRU00434"/>
    </source>
</evidence>
<evidence type="ECO:0000255" key="2">
    <source>
        <dbReference type="PROSITE-ProRule" id="PRU00441"/>
    </source>
</evidence>
<evidence type="ECO:0000269" key="3">
    <source>
    </source>
</evidence>
<evidence type="ECO:0000269" key="4">
    <source>
    </source>
</evidence>
<evidence type="ECO:0000269" key="5">
    <source>
    </source>
</evidence>
<evidence type="ECO:0000269" key="6">
    <source>
    </source>
</evidence>
<evidence type="ECO:0000305" key="7"/>
<sequence length="1514" mass="168971">MDFLGSTTGSGTLAMLFSFSESILPLDSRSFLLKPLFLRWLSGFLHSVLLLVLFFSWVRKKIRGDSGVTESLKDRRDFGFKSALFCSLALSLLNLVLMSLSGFYWYESGWLDNEQLVSSLGFLLGMVSWGVLSICLHRCRDCEHKKAPFLLRLWLVFYLVVSCYSLVVDFVMYERRETVPVHLLVFDIVAFIAAVFLGYVAVLKKDRSNSNGVLEEPLLNGGDSRVGGDDSVELNKTNGSGEATPYSRAGILSLLTFSWMSPLIDIGNKKTLDLEDVPQLHDTDSVVGLAPKFRSMLESPDGGERSGVTTFKLIKALYFTAQWEILVTAFFAFIYTVASYVGPALIDTFVQYLNGRRQYNHEGYVLVITFFAAKIVECLSQRHWFFRLQKVGIRMRSALVAMIYEKGLTLSCQSKQGRTSGEIINFMTVDAERIGNFSWYMHDPWMVLLQVGLALWILYRNLGLASIAALVATIIVMLINFPFGRMQERFQEKLMEAKDSRMKSTSEILRNMRILKLQGWEMKFLSKIFDLRKSEEGWLKKYVYNSAVISFVFWGAPTLVSVSTFGACILLGIPLESGKILSALATFRILQEPIYNLPDTISMIVQTKVSLDRLASYLCLDNLQPDIVERLPKGSSDVAVEVINSTLSWDVSSSNPTLKDINFKVFPGMKVAVCGTVGSGKSSLLSSLLGEVPKVSGSLKVCGTKAYVAQSPWIQSGKIEDNILFGKPMERERYDKVLEACSLSKDLEILSFGDQTVIGERGINLSGGQKQRIQIARALYQDADIYLFDDPFSAVDAHTGSHLFKEVLLGLLCSKSVIYVTHQVEFLPAADLILVMKDGRISQAGKYNDILNSGTDFMELIGAHQEALAVVDSVDANSVSEKSALGQENVIVKDAIAVDEKLESQDLKNDKLESVEPQRQIIQEEEREKGSVALDVYWKYITLAYGGALVPFILLGQVLFQLLQIGSNYWMAWATPVSEDVQAPVKLSTLMIVYVALAFGSSLCILLRATLLVTAGYKTATELFHKMHHCIFRSPMSFFDSTPSGRIMSRASTDQSAVDLELPYQFGSVAITVIQLIGIIGVMSQVSWLVFLVFIPVVAASIWYQRYYIAAARELSRLVGVCKAPLIQHFSETISGATTIRSFSQEFRFRSDNMRLSDGYSRPKFYTAGAMEWLCFRLDMLSSLTFVFSLVFLVSIPTGVIDPSLAGLAVTYGLSLNTLQAWLIWTLCNLENKIISVERILQYASVPSEPPLVIESNRPEQSWPSRGEVEIRDLQVRYAPHMPLVLRGITCTFKGGLRTGIVGRTGSGKSTLIQTLFRIVEPSAGEIRIDGVNILTIGLHDLRLRLSIIPQDPTMFEGTMRSNLDPLEEYTDDQIWEALDKCQLGDEVRKKEQKLDSSVSENGDNWSMGQRQLVCLGRVLLKRSKILVLDEATASVDTATDNLIQKTLREHFSDCTVITIAHRISSVIDSDMVLLLSNGIIEEYDTPVRLLEDKSSSFSKLVAEYTSRSSSSFD</sequence>
<protein>
    <recommendedName>
        <fullName>ABC transporter C family member 3</fullName>
        <shortName>ABC transporter ABCC.3</shortName>
        <shortName>AtABCC3</shortName>
        <ecNumber>7.6.2.2</ecNumber>
    </recommendedName>
    <alternativeName>
        <fullName>ATP-energized glutathione S-conjugate pump 3</fullName>
    </alternativeName>
    <alternativeName>
        <fullName>Glutathione S-conjugate-transporting ATPase 3</fullName>
    </alternativeName>
    <alternativeName>
        <fullName>Multidrug resistance-associated protein 3</fullName>
    </alternativeName>
</protein>
<feature type="chain" id="PRO_0000226074" description="ABC transporter C family member 3">
    <location>
        <begin position="1"/>
        <end position="1514"/>
    </location>
</feature>
<feature type="transmembrane region" description="Helical" evidence="2">
    <location>
        <begin position="35"/>
        <end position="55"/>
    </location>
</feature>
<feature type="transmembrane region" description="Helical" evidence="2">
    <location>
        <begin position="83"/>
        <end position="103"/>
    </location>
</feature>
<feature type="transmembrane region" description="Helical" evidence="2">
    <location>
        <begin position="116"/>
        <end position="136"/>
    </location>
</feature>
<feature type="transmembrane region" description="Helical" evidence="2">
    <location>
        <begin position="153"/>
        <end position="173"/>
    </location>
</feature>
<feature type="transmembrane region" description="Helical" evidence="2">
    <location>
        <begin position="183"/>
        <end position="203"/>
    </location>
</feature>
<feature type="transmembrane region" description="Helical" evidence="2">
    <location>
        <begin position="325"/>
        <end position="345"/>
    </location>
</feature>
<feature type="transmembrane region" description="Helical" evidence="2">
    <location>
        <begin position="364"/>
        <end position="386"/>
    </location>
</feature>
<feature type="transmembrane region" description="Helical" evidence="2">
    <location>
        <begin position="439"/>
        <end position="459"/>
    </location>
</feature>
<feature type="transmembrane region" description="Helical" evidence="2">
    <location>
        <begin position="463"/>
        <end position="483"/>
    </location>
</feature>
<feature type="transmembrane region" description="Helical" evidence="2">
    <location>
        <begin position="551"/>
        <end position="571"/>
    </location>
</feature>
<feature type="transmembrane region" description="Helical" evidence="2">
    <location>
        <begin position="940"/>
        <end position="960"/>
    </location>
</feature>
<feature type="transmembrane region" description="Helical" evidence="2">
    <location>
        <begin position="987"/>
        <end position="1007"/>
    </location>
</feature>
<feature type="transmembrane region" description="Helical" evidence="2">
    <location>
        <begin position="1077"/>
        <end position="1097"/>
    </location>
</feature>
<feature type="transmembrane region" description="Helical" evidence="2">
    <location>
        <begin position="1181"/>
        <end position="1201"/>
    </location>
</feature>
<feature type="transmembrane region" description="Helical" evidence="2">
    <location>
        <begin position="1205"/>
        <end position="1225"/>
    </location>
</feature>
<feature type="domain" description="ABC transmembrane type-1 1" evidence="2">
    <location>
        <begin position="325"/>
        <end position="606"/>
    </location>
</feature>
<feature type="domain" description="ABC transporter 1" evidence="1">
    <location>
        <begin position="640"/>
        <end position="863"/>
    </location>
</feature>
<feature type="domain" description="ABC transmembrane type-1 2" evidence="2">
    <location>
        <begin position="950"/>
        <end position="1232"/>
    </location>
</feature>
<feature type="domain" description="ABC transporter 2" evidence="1">
    <location>
        <begin position="1271"/>
        <end position="1503"/>
    </location>
</feature>
<feature type="binding site" evidence="1">
    <location>
        <begin position="675"/>
        <end position="682"/>
    </location>
    <ligand>
        <name>ATP</name>
        <dbReference type="ChEBI" id="CHEBI:30616"/>
        <label>1</label>
    </ligand>
</feature>
<feature type="binding site" evidence="1">
    <location>
        <begin position="1303"/>
        <end position="1310"/>
    </location>
    <ligand>
        <name>ATP</name>
        <dbReference type="ChEBI" id="CHEBI:30616"/>
        <label>2</label>
    </ligand>
</feature>
<feature type="splice variant" id="VSP_018099" description="In isoform 2." evidence="7">
    <original>SIIPQDPTMFEGTMRSNLDPLEEYTD</original>
    <variation>N</variation>
    <location>
        <begin position="1347"/>
        <end position="1372"/>
    </location>
</feature>
<organism>
    <name type="scientific">Arabidopsis thaliana</name>
    <name type="common">Mouse-ear cress</name>
    <dbReference type="NCBI Taxonomy" id="3702"/>
    <lineage>
        <taxon>Eukaryota</taxon>
        <taxon>Viridiplantae</taxon>
        <taxon>Streptophyta</taxon>
        <taxon>Embryophyta</taxon>
        <taxon>Tracheophyta</taxon>
        <taxon>Spermatophyta</taxon>
        <taxon>Magnoliopsida</taxon>
        <taxon>eudicotyledons</taxon>
        <taxon>Gunneridae</taxon>
        <taxon>Pentapetalae</taxon>
        <taxon>rosids</taxon>
        <taxon>malvids</taxon>
        <taxon>Brassicales</taxon>
        <taxon>Brassicaceae</taxon>
        <taxon>Camelineae</taxon>
        <taxon>Arabidopsis</taxon>
    </lineage>
</organism>
<accession>Q9LK64</accession>
<accession>O24510</accession>
<accession>Q3EB73</accession>
<proteinExistence type="evidence at protein level"/>
<keyword id="KW-0025">Alternative splicing</keyword>
<keyword id="KW-0067">ATP-binding</keyword>
<keyword id="KW-0472">Membrane</keyword>
<keyword id="KW-0547">Nucleotide-binding</keyword>
<keyword id="KW-1185">Reference proteome</keyword>
<keyword id="KW-0677">Repeat</keyword>
<keyword id="KW-1278">Translocase</keyword>
<keyword id="KW-0812">Transmembrane</keyword>
<keyword id="KW-1133">Transmembrane helix</keyword>
<keyword id="KW-0813">Transport</keyword>
<gene>
    <name type="primary">ABCC3</name>
    <name type="synonym">EST2</name>
    <name type="synonym">MRP3</name>
    <name type="ordered locus">At3g13080</name>
    <name type="ORF">MJG19.3</name>
</gene>
<reference key="1">
    <citation type="journal article" date="1997" name="FEBS Lett.">
        <title>Differential expression of genes coding for ABC transporters after treatment of Arabidopsis thaliana with xenobiotics.</title>
        <authorList>
            <person name="Tommasini R."/>
            <person name="Vogt E."/>
            <person name="Schmid J."/>
            <person name="Fromentau M."/>
            <person name="Amrhein N."/>
            <person name="Martinoia E."/>
        </authorList>
    </citation>
    <scope>NUCLEOTIDE SEQUENCE [MRNA] (ISOFORM 1)</scope>
    <scope>INDUCTION</scope>
    <source>
        <strain>cv. Columbia</strain>
    </source>
</reference>
<reference key="2">
    <citation type="journal article" date="2000" name="DNA Res.">
        <title>Structural analysis of Arabidopsis thaliana chromosome 3. II. Sequence features of the 4,251,695 bp regions covered by 90 P1, TAC and BAC clones.</title>
        <authorList>
            <person name="Kaneko T."/>
            <person name="Katoh T."/>
            <person name="Sato S."/>
            <person name="Nakamura Y."/>
            <person name="Asamizu E."/>
            <person name="Tabata S."/>
        </authorList>
    </citation>
    <scope>NUCLEOTIDE SEQUENCE [LARGE SCALE GENOMIC DNA]</scope>
    <source>
        <strain>cv. Columbia</strain>
    </source>
</reference>
<reference key="3">
    <citation type="journal article" date="2017" name="Plant J.">
        <title>Araport11: a complete reannotation of the Arabidopsis thaliana reference genome.</title>
        <authorList>
            <person name="Cheng C.Y."/>
            <person name="Krishnakumar V."/>
            <person name="Chan A.P."/>
            <person name="Thibaud-Nissen F."/>
            <person name="Schobel S."/>
            <person name="Town C.D."/>
        </authorList>
    </citation>
    <scope>GENOME REANNOTATION</scope>
    <source>
        <strain>cv. Columbia</strain>
    </source>
</reference>
<reference key="4">
    <citation type="journal article" date="1998" name="Mol. Gen. Genet.">
        <title>Cloning and expression analyses of the AtMRP4, a novel MRP-like gene from Arabidopsis thaliana.</title>
        <authorList>
            <person name="Sanchez-Fernandez R."/>
            <person name="Ardiles-Diaz W."/>
            <person name="Van Montagu M."/>
            <person name="Inze D."/>
            <person name="May M.J."/>
        </authorList>
    </citation>
    <scope>INDUCTION</scope>
</reference>
<reference key="5">
    <citation type="journal article" date="1998" name="Plant J.">
        <title>An ABC-transporter of Arabidopsis thaliana has both glutathione-conjugate and chlorophyll catabolite transport activity.</title>
        <authorList>
            <person name="Tommasini R."/>
            <person name="Vogt E."/>
            <person name="Fromenteau M."/>
            <person name="Hoertensteiner S."/>
            <person name="Matile P."/>
            <person name="Amrhein N."/>
            <person name="Martinoia E."/>
        </authorList>
    </citation>
    <scope>FUNCTION</scope>
    <scope>ACTIVITY REGULATION</scope>
    <scope>BIOPHYSICOCHEMICAL PROPERTIES</scope>
    <scope>TISSUE SPECIFICITY</scope>
</reference>
<reference key="6">
    <citation type="journal article" date="2001" name="J. Biol. Chem.">
        <title>The Arabidopsis thaliana ABC protein superfamily, a complete inventory.</title>
        <authorList>
            <person name="Sanchez-Fernandez R."/>
            <person name="Davies T.G."/>
            <person name="Coleman J.O."/>
            <person name="Rea P.A."/>
        </authorList>
    </citation>
    <scope>GENE FAMILY</scope>
    <scope>NOMENCLATURE</scope>
</reference>
<reference key="7">
    <citation type="journal article" date="2002" name="Planta">
        <title>Multifunctionality of plant ABC transporters -- more than just detoxifiers.</title>
        <authorList>
            <person name="Martinoia E."/>
            <person name="Klein M."/>
            <person name="Geisler M."/>
            <person name="Bovet L."/>
            <person name="Forestier C."/>
            <person name="Kolukisaoglu H.U."/>
            <person name="Mueller-Roeber B."/>
            <person name="Schulz B."/>
        </authorList>
    </citation>
    <scope>GENE FAMILY</scope>
</reference>
<reference key="8">
    <citation type="journal article" date="2002" name="Planta">
        <title>Family business: the multidrug-resistance related protein (MRP) ABC transporter genes in Arabidopsis thaliana.</title>
        <authorList>
            <person name="Kolukisaoglu U.H."/>
            <person name="Bovet L."/>
            <person name="Klein M."/>
            <person name="Eggmann T."/>
            <person name="Geisler M."/>
            <person name="Wanke D."/>
            <person name="Martinoia E."/>
            <person name="Schulz B."/>
        </authorList>
    </citation>
    <scope>TISSUE SPECIFICITY</scope>
</reference>
<reference key="9">
    <citation type="journal article" date="2008" name="Trends Plant Sci.">
        <title>Plant ABC proteins - a unified nomenclature and updated inventory.</title>
        <authorList>
            <person name="Verrier P.J."/>
            <person name="Bird D."/>
            <person name="Burla B."/>
            <person name="Dassa E."/>
            <person name="Forestier C."/>
            <person name="Geisler M."/>
            <person name="Klein M."/>
            <person name="Kolukisaoglu H.U."/>
            <person name="Lee Y."/>
            <person name="Martinoia E."/>
            <person name="Murphy A."/>
            <person name="Rea P.A."/>
            <person name="Samuels L."/>
            <person name="Schulz B."/>
            <person name="Spalding E.J."/>
            <person name="Yazaki K."/>
            <person name="Theodoulou F.L."/>
        </authorList>
    </citation>
    <scope>GENE FAMILY</scope>
    <scope>NOMENCLATURE</scope>
</reference>
<name>AB3C_ARATH</name>